<feature type="chain" id="PRO_0000105090" description="Anti-H(O) lectin">
    <location>
        <begin position="1"/>
        <end position="240"/>
    </location>
</feature>
<feature type="binding site" evidence="1">
    <location>
        <position position="124"/>
    </location>
    <ligand>
        <name>Mn(2+)</name>
        <dbReference type="ChEBI" id="CHEBI:29035"/>
    </ligand>
</feature>
<feature type="binding site" evidence="1">
    <location>
        <position position="126"/>
    </location>
    <ligand>
        <name>Ca(2+)</name>
        <dbReference type="ChEBI" id="CHEBI:29108"/>
    </ligand>
</feature>
<feature type="binding site" evidence="1">
    <location>
        <position position="126"/>
    </location>
    <ligand>
        <name>Mn(2+)</name>
        <dbReference type="ChEBI" id="CHEBI:29035"/>
    </ligand>
</feature>
<feature type="binding site" evidence="1">
    <location>
        <position position="128"/>
    </location>
    <ligand>
        <name>Ca(2+)</name>
        <dbReference type="ChEBI" id="CHEBI:29108"/>
    </ligand>
</feature>
<feature type="binding site" evidence="1">
    <location>
        <position position="130"/>
    </location>
    <ligand>
        <name>Ca(2+)</name>
        <dbReference type="ChEBI" id="CHEBI:29108"/>
    </ligand>
</feature>
<feature type="binding site" evidence="1">
    <location>
        <position position="133"/>
    </location>
    <ligand>
        <name>Ca(2+)</name>
        <dbReference type="ChEBI" id="CHEBI:29108"/>
    </ligand>
</feature>
<feature type="binding site" evidence="1">
    <location>
        <position position="133"/>
    </location>
    <ligand>
        <name>Mn(2+)</name>
        <dbReference type="ChEBI" id="CHEBI:29035"/>
    </ligand>
</feature>
<feature type="binding site" evidence="1">
    <location>
        <position position="141"/>
    </location>
    <ligand>
        <name>Mn(2+)</name>
        <dbReference type="ChEBI" id="CHEBI:29035"/>
    </ligand>
</feature>
<feature type="glycosylation site" description="N-linked (GlcNAc...) asparagine" evidence="2">
    <location>
        <position position="4"/>
    </location>
</feature>
<feature type="unsure residue">
    <location>
        <position position="4"/>
    </location>
</feature>
<comment type="function">
    <text>L-fucose specific lectin.</text>
</comment>
<comment type="similarity">
    <text evidence="3">Belongs to the leguminous lectin family.</text>
</comment>
<name>LEC_LOTTE</name>
<protein>
    <recommendedName>
        <fullName>Anti-H(O) lectin</fullName>
    </recommendedName>
    <alternativeName>
        <fullName>LTA</fullName>
    </alternativeName>
</protein>
<accession>P19664</accession>
<evidence type="ECO:0000250" key="1"/>
<evidence type="ECO:0000255" key="2"/>
<evidence type="ECO:0000305" key="3"/>
<keyword id="KW-0002">3D-structure</keyword>
<keyword id="KW-0106">Calcium</keyword>
<keyword id="KW-0903">Direct protein sequencing</keyword>
<keyword id="KW-0325">Glycoprotein</keyword>
<keyword id="KW-0430">Lectin</keyword>
<keyword id="KW-0464">Manganese</keyword>
<keyword id="KW-0479">Metal-binding</keyword>
<reference key="1">
    <citation type="journal article" date="1990" name="FEBS Lett.">
        <title>The primary structure of the Lotus tetragonolobus seed lectin.</title>
        <authorList>
            <person name="Konami Y."/>
            <person name="Yamamoto K."/>
            <person name="Osawa T."/>
        </authorList>
    </citation>
    <scope>PROTEIN SEQUENCE</scope>
    <source>
        <tissue>Seed</tissue>
    </source>
</reference>
<sequence>VSFNYTEFKDDGSLILQGDAKIWTDGRLAMPTDPLVNNPKTTRSAGRALYATPVPIWDSATGNVASFVTSFNFLFVIRELKYTPTDGLVFFLAPVGTEIPSGSTGGFLGIFDGSNGFNQFVAVEFDSYHNIWDPKSLRSSHVGIDVNSIMSLKAVNWNRVSGSLEKATIIYDSQTNILSVVMTSQNGQITTIYGTIDLKTVLPEKVSVGFSATTGNPEREKHDIYSWSFTSTLKEPEEQA</sequence>
<organism>
    <name type="scientific">Lotus tetragonolobus</name>
    <name type="common">Winged pea</name>
    <name type="synonym">Tetragonolobus purpureus</name>
    <dbReference type="NCBI Taxonomy" id="3868"/>
    <lineage>
        <taxon>Eukaryota</taxon>
        <taxon>Viridiplantae</taxon>
        <taxon>Streptophyta</taxon>
        <taxon>Embryophyta</taxon>
        <taxon>Tracheophyta</taxon>
        <taxon>Spermatophyta</taxon>
        <taxon>Magnoliopsida</taxon>
        <taxon>eudicotyledons</taxon>
        <taxon>Gunneridae</taxon>
        <taxon>Pentapetalae</taxon>
        <taxon>rosids</taxon>
        <taxon>fabids</taxon>
        <taxon>Fabales</taxon>
        <taxon>Fabaceae</taxon>
        <taxon>Papilionoideae</taxon>
        <taxon>50 kb inversion clade</taxon>
        <taxon>NPAAA clade</taxon>
        <taxon>Hologalegina</taxon>
        <taxon>robinioid clade</taxon>
        <taxon>Loteae</taxon>
        <taxon>Lotus</taxon>
    </lineage>
</organism>
<dbReference type="PIR" id="S11056">
    <property type="entry name" value="S11056"/>
</dbReference>
<dbReference type="PDB" id="2EIG">
    <property type="method" value="X-ray"/>
    <property type="resolution" value="2.00 A"/>
    <property type="chains" value="A/B/C/D=1-240"/>
</dbReference>
<dbReference type="PDBsum" id="2EIG"/>
<dbReference type="SMR" id="P19664"/>
<dbReference type="UniLectin" id="P19664"/>
<dbReference type="GO" id="GO:0030246">
    <property type="term" value="F:carbohydrate binding"/>
    <property type="evidence" value="ECO:0007669"/>
    <property type="project" value="UniProtKB-KW"/>
</dbReference>
<dbReference type="GO" id="GO:0046872">
    <property type="term" value="F:metal ion binding"/>
    <property type="evidence" value="ECO:0007669"/>
    <property type="project" value="UniProtKB-KW"/>
</dbReference>
<dbReference type="CDD" id="cd06899">
    <property type="entry name" value="lectin_legume_LecRK_Arcelin_ConA"/>
    <property type="match status" value="1"/>
</dbReference>
<dbReference type="Gene3D" id="2.60.120.200">
    <property type="match status" value="1"/>
</dbReference>
<dbReference type="InterPro" id="IPR013320">
    <property type="entry name" value="ConA-like_dom_sf"/>
</dbReference>
<dbReference type="InterPro" id="IPR016363">
    <property type="entry name" value="L-lectin"/>
</dbReference>
<dbReference type="InterPro" id="IPR000985">
    <property type="entry name" value="Lectin_LegA_CS"/>
</dbReference>
<dbReference type="InterPro" id="IPR019825">
    <property type="entry name" value="Lectin_legB_Mn/Ca_BS"/>
</dbReference>
<dbReference type="InterPro" id="IPR001220">
    <property type="entry name" value="Legume_lectin_dom"/>
</dbReference>
<dbReference type="InterPro" id="IPR050258">
    <property type="entry name" value="Leguminous_Lectin"/>
</dbReference>
<dbReference type="PANTHER" id="PTHR32401">
    <property type="entry name" value="CONCANAVALIN A-LIKE LECTIN FAMILY PROTEIN"/>
    <property type="match status" value="1"/>
</dbReference>
<dbReference type="PANTHER" id="PTHR32401:SF49">
    <property type="entry name" value="OS10G0129200 PROTEIN"/>
    <property type="match status" value="1"/>
</dbReference>
<dbReference type="Pfam" id="PF00139">
    <property type="entry name" value="Lectin_legB"/>
    <property type="match status" value="1"/>
</dbReference>
<dbReference type="PIRSF" id="PIRSF002690">
    <property type="entry name" value="L-type_lectin_plant"/>
    <property type="match status" value="1"/>
</dbReference>
<dbReference type="SUPFAM" id="SSF49899">
    <property type="entry name" value="Concanavalin A-like lectins/glucanases"/>
    <property type="match status" value="1"/>
</dbReference>
<dbReference type="PROSITE" id="PS00308">
    <property type="entry name" value="LECTIN_LEGUME_ALPHA"/>
    <property type="match status" value="1"/>
</dbReference>
<dbReference type="PROSITE" id="PS00307">
    <property type="entry name" value="LECTIN_LEGUME_BETA"/>
    <property type="match status" value="1"/>
</dbReference>
<proteinExistence type="evidence at protein level"/>